<organism>
    <name type="scientific">Burkholderia ambifaria (strain MC40-6)</name>
    <dbReference type="NCBI Taxonomy" id="398577"/>
    <lineage>
        <taxon>Bacteria</taxon>
        <taxon>Pseudomonadati</taxon>
        <taxon>Pseudomonadota</taxon>
        <taxon>Betaproteobacteria</taxon>
        <taxon>Burkholderiales</taxon>
        <taxon>Burkholderiaceae</taxon>
        <taxon>Burkholderia</taxon>
        <taxon>Burkholderia cepacia complex</taxon>
    </lineage>
</organism>
<reference key="1">
    <citation type="submission" date="2008-04" db="EMBL/GenBank/DDBJ databases">
        <title>Complete sequence of chromosome 1 of Burkholderia ambifaria MC40-6.</title>
        <authorList>
            <person name="Copeland A."/>
            <person name="Lucas S."/>
            <person name="Lapidus A."/>
            <person name="Glavina del Rio T."/>
            <person name="Dalin E."/>
            <person name="Tice H."/>
            <person name="Pitluck S."/>
            <person name="Chain P."/>
            <person name="Malfatti S."/>
            <person name="Shin M."/>
            <person name="Vergez L."/>
            <person name="Lang D."/>
            <person name="Schmutz J."/>
            <person name="Larimer F."/>
            <person name="Land M."/>
            <person name="Hauser L."/>
            <person name="Kyrpides N."/>
            <person name="Lykidis A."/>
            <person name="Ramette A."/>
            <person name="Konstantinidis K."/>
            <person name="Tiedje J."/>
            <person name="Richardson P."/>
        </authorList>
    </citation>
    <scope>NUCLEOTIDE SEQUENCE [LARGE SCALE GENOMIC DNA]</scope>
    <source>
        <strain>MC40-6</strain>
    </source>
</reference>
<name>MOBA_BURA4</name>
<dbReference type="EC" id="2.7.7.77" evidence="1"/>
<dbReference type="EMBL" id="CP001025">
    <property type="protein sequence ID" value="ACB63479.1"/>
    <property type="molecule type" value="Genomic_DNA"/>
</dbReference>
<dbReference type="RefSeq" id="WP_012363392.1">
    <property type="nucleotide sequence ID" value="NC_010551.1"/>
</dbReference>
<dbReference type="SMR" id="B1YVJ8"/>
<dbReference type="KEGG" id="bac:BamMC406_0988"/>
<dbReference type="HOGENOM" id="CLU_055597_5_1_4"/>
<dbReference type="OrthoDB" id="9788394at2"/>
<dbReference type="Proteomes" id="UP000001680">
    <property type="component" value="Chromosome 1"/>
</dbReference>
<dbReference type="GO" id="GO:0005737">
    <property type="term" value="C:cytoplasm"/>
    <property type="evidence" value="ECO:0007669"/>
    <property type="project" value="UniProtKB-SubCell"/>
</dbReference>
<dbReference type="GO" id="GO:0005525">
    <property type="term" value="F:GTP binding"/>
    <property type="evidence" value="ECO:0007669"/>
    <property type="project" value="UniProtKB-UniRule"/>
</dbReference>
<dbReference type="GO" id="GO:0046872">
    <property type="term" value="F:metal ion binding"/>
    <property type="evidence" value="ECO:0007669"/>
    <property type="project" value="UniProtKB-KW"/>
</dbReference>
<dbReference type="GO" id="GO:0061603">
    <property type="term" value="F:molybdenum cofactor guanylyltransferase activity"/>
    <property type="evidence" value="ECO:0007669"/>
    <property type="project" value="UniProtKB-EC"/>
</dbReference>
<dbReference type="GO" id="GO:1902758">
    <property type="term" value="P:bis(molybdopterin guanine dinucleotide)molybdenum biosynthetic process"/>
    <property type="evidence" value="ECO:0007669"/>
    <property type="project" value="TreeGrafter"/>
</dbReference>
<dbReference type="CDD" id="cd02503">
    <property type="entry name" value="MobA"/>
    <property type="match status" value="1"/>
</dbReference>
<dbReference type="Gene3D" id="3.90.550.10">
    <property type="entry name" value="Spore Coat Polysaccharide Biosynthesis Protein SpsA, Chain A"/>
    <property type="match status" value="1"/>
</dbReference>
<dbReference type="HAMAP" id="MF_00316">
    <property type="entry name" value="MobA"/>
    <property type="match status" value="1"/>
</dbReference>
<dbReference type="InterPro" id="IPR025877">
    <property type="entry name" value="MobA-like_NTP_Trfase"/>
</dbReference>
<dbReference type="InterPro" id="IPR013482">
    <property type="entry name" value="Molybde_CF_guanTrfase"/>
</dbReference>
<dbReference type="InterPro" id="IPR029044">
    <property type="entry name" value="Nucleotide-diphossugar_trans"/>
</dbReference>
<dbReference type="NCBIfam" id="TIGR02665">
    <property type="entry name" value="molyb_mobA"/>
    <property type="match status" value="1"/>
</dbReference>
<dbReference type="PANTHER" id="PTHR19136">
    <property type="entry name" value="MOLYBDENUM COFACTOR GUANYLYLTRANSFERASE"/>
    <property type="match status" value="1"/>
</dbReference>
<dbReference type="PANTHER" id="PTHR19136:SF81">
    <property type="entry name" value="MOLYBDENUM COFACTOR GUANYLYLTRANSFERASE"/>
    <property type="match status" value="1"/>
</dbReference>
<dbReference type="Pfam" id="PF12804">
    <property type="entry name" value="NTP_transf_3"/>
    <property type="match status" value="1"/>
</dbReference>
<dbReference type="SUPFAM" id="SSF53448">
    <property type="entry name" value="Nucleotide-diphospho-sugar transferases"/>
    <property type="match status" value="1"/>
</dbReference>
<feature type="chain" id="PRO_1000115794" description="Molybdenum cofactor guanylyltransferase">
    <location>
        <begin position="1"/>
        <end position="205"/>
    </location>
</feature>
<feature type="binding site" evidence="1">
    <location>
        <begin position="14"/>
        <end position="16"/>
    </location>
    <ligand>
        <name>GTP</name>
        <dbReference type="ChEBI" id="CHEBI:37565"/>
    </ligand>
</feature>
<feature type="binding site" evidence="1">
    <location>
        <position position="27"/>
    </location>
    <ligand>
        <name>GTP</name>
        <dbReference type="ChEBI" id="CHEBI:37565"/>
    </ligand>
</feature>
<feature type="binding site" evidence="1">
    <location>
        <position position="77"/>
    </location>
    <ligand>
        <name>GTP</name>
        <dbReference type="ChEBI" id="CHEBI:37565"/>
    </ligand>
</feature>
<feature type="binding site" evidence="1">
    <location>
        <position position="107"/>
    </location>
    <ligand>
        <name>GTP</name>
        <dbReference type="ChEBI" id="CHEBI:37565"/>
    </ligand>
</feature>
<feature type="binding site" evidence="1">
    <location>
        <position position="107"/>
    </location>
    <ligand>
        <name>Mg(2+)</name>
        <dbReference type="ChEBI" id="CHEBI:18420"/>
    </ligand>
</feature>
<gene>
    <name evidence="1" type="primary">mobA</name>
    <name type="ordered locus">BamMC406_0988</name>
</gene>
<proteinExistence type="inferred from homology"/>
<keyword id="KW-0963">Cytoplasm</keyword>
<keyword id="KW-0342">GTP-binding</keyword>
<keyword id="KW-0460">Magnesium</keyword>
<keyword id="KW-0479">Metal-binding</keyword>
<keyword id="KW-0501">Molybdenum cofactor biosynthesis</keyword>
<keyword id="KW-0547">Nucleotide-binding</keyword>
<keyword id="KW-0808">Transferase</keyword>
<sequence length="205" mass="21902">MSASPSPSITGLLLAGGRATRMDGADKGLQLLDGTPLALHVLRRLSPQVDETLISANRNADRYAELGAPFDARIVADETADFPGPLAGLLAGMRAARAPLVACAPCDTPYLPADLIARLHAALDAQQADIAMAVTVDAQHARSPQPTFALLRTSLADDLAAALAAGERKVRAWYARHKTVEVEFRDERAFYNANSWHELAALARR</sequence>
<protein>
    <recommendedName>
        <fullName evidence="1">Molybdenum cofactor guanylyltransferase</fullName>
        <shortName evidence="1">MoCo guanylyltransferase</shortName>
        <ecNumber evidence="1">2.7.7.77</ecNumber>
    </recommendedName>
    <alternativeName>
        <fullName evidence="1">GTP:molybdopterin guanylyltransferase</fullName>
    </alternativeName>
    <alternativeName>
        <fullName evidence="1">Mo-MPT guanylyltransferase</fullName>
    </alternativeName>
    <alternativeName>
        <fullName evidence="1">Molybdopterin guanylyltransferase</fullName>
    </alternativeName>
    <alternativeName>
        <fullName evidence="1">Molybdopterin-guanine dinucleotide synthase</fullName>
        <shortName evidence="1">MGD synthase</shortName>
    </alternativeName>
</protein>
<accession>B1YVJ8</accession>
<evidence type="ECO:0000255" key="1">
    <source>
        <dbReference type="HAMAP-Rule" id="MF_00316"/>
    </source>
</evidence>
<comment type="function">
    <text evidence="1">Transfers a GMP moiety from GTP to Mo-molybdopterin (Mo-MPT) cofactor (Moco or molybdenum cofactor) to form Mo-molybdopterin guanine dinucleotide (Mo-MGD) cofactor.</text>
</comment>
<comment type="catalytic activity">
    <reaction evidence="1">
        <text>Mo-molybdopterin + GTP + H(+) = Mo-molybdopterin guanine dinucleotide + diphosphate</text>
        <dbReference type="Rhea" id="RHEA:34243"/>
        <dbReference type="ChEBI" id="CHEBI:15378"/>
        <dbReference type="ChEBI" id="CHEBI:33019"/>
        <dbReference type="ChEBI" id="CHEBI:37565"/>
        <dbReference type="ChEBI" id="CHEBI:71302"/>
        <dbReference type="ChEBI" id="CHEBI:71310"/>
        <dbReference type="EC" id="2.7.7.77"/>
    </reaction>
</comment>
<comment type="cofactor">
    <cofactor evidence="1">
        <name>Mg(2+)</name>
        <dbReference type="ChEBI" id="CHEBI:18420"/>
    </cofactor>
</comment>
<comment type="subunit">
    <text evidence="1">Monomer.</text>
</comment>
<comment type="subcellular location">
    <subcellularLocation>
        <location evidence="1">Cytoplasm</location>
    </subcellularLocation>
</comment>
<comment type="domain">
    <text evidence="1">The N-terminal domain determines nucleotide recognition and specific binding, while the C-terminal domain determines the specific binding to the target protein.</text>
</comment>
<comment type="similarity">
    <text evidence="1">Belongs to the MobA family.</text>
</comment>